<proteinExistence type="inferred from homology"/>
<sequence>MASVSISCPSCSATDGVVRNGKSTAGHQRYLCSHCRKTWQLQFTYTASQPGTHQKIIDMAMNGVGCRATARIMGVGLNTILRHLKNSGRSR</sequence>
<protein>
    <recommendedName>
        <fullName>Insertion element IS1 1 protein InsA</fullName>
    </recommendedName>
    <alternativeName>
        <fullName>IS1a</fullName>
    </alternativeName>
</protein>
<dbReference type="EMBL" id="J01729">
    <property type="protein sequence ID" value="AAA96228.1"/>
    <property type="molecule type" value="Genomic_DNA"/>
</dbReference>
<dbReference type="EMBL" id="X52534">
    <property type="protein sequence ID" value="CAA36770.1"/>
    <property type="molecule type" value="Genomic_DNA"/>
</dbReference>
<dbReference type="EMBL" id="U00096">
    <property type="protein sequence ID" value="AAC73133.1"/>
    <property type="molecule type" value="Genomic_DNA"/>
</dbReference>
<dbReference type="EMBL" id="AP009048">
    <property type="protein sequence ID" value="BAE76034.1"/>
    <property type="molecule type" value="Genomic_DNA"/>
</dbReference>
<dbReference type="PIR" id="B93826">
    <property type="entry name" value="IEECB9"/>
</dbReference>
<dbReference type="PIR" id="JN0134">
    <property type="entry name" value="JN0134"/>
</dbReference>
<dbReference type="RefSeq" id="NP_414563.1">
    <property type="nucleotide sequence ID" value="NC_000913.3"/>
</dbReference>
<dbReference type="RefSeq" id="YP_001816554.1">
    <property type="nucleotide sequence ID" value="NC_010558.1"/>
</dbReference>
<dbReference type="RefSeq" id="YP_001816567.1">
    <property type="nucleotide sequence ID" value="NC_010558.1"/>
</dbReference>
<dbReference type="RefSeq" id="YP_002527490.1">
    <property type="nucleotide sequence ID" value="NC_011964.1"/>
</dbReference>
<dbReference type="RefSeq" id="YP_004422909.1">
    <property type="nucleotide sequence ID" value="NC_015472.1"/>
</dbReference>
<dbReference type="RefSeq" id="YP_444026.1">
    <property type="nucleotide sequence ID" value="NC_007675.1"/>
</dbReference>
<dbReference type="RefSeq" id="YP_444042.1">
    <property type="nucleotide sequence ID" value="NC_007675.1"/>
</dbReference>
<dbReference type="SMR" id="P0CF07"/>
<dbReference type="FunCoup" id="P0CF07">
    <property type="interactions" value="10"/>
</dbReference>
<dbReference type="STRING" id="511145.b0022"/>
<dbReference type="PaxDb" id="511145-b0022"/>
<dbReference type="DNASU" id="948449"/>
<dbReference type="EnsemblBacteria" id="AAC73133">
    <property type="protein sequence ID" value="AAC73133"/>
    <property type="gene ID" value="b0022"/>
</dbReference>
<dbReference type="GeneID" id="948449"/>
<dbReference type="KEGG" id="ecj:JW0021"/>
<dbReference type="KEGG" id="eco:b0022"/>
<dbReference type="KEGG" id="eco:b1894"/>
<dbReference type="KEGG" id="eco:b3444"/>
<dbReference type="KEGG" id="ecoc:C3026_00105"/>
<dbReference type="EchoBASE" id="EB4701"/>
<dbReference type="eggNOG" id="COG3677">
    <property type="taxonomic scope" value="Bacteria"/>
</dbReference>
<dbReference type="HOGENOM" id="CLU_076276_6_3_6"/>
<dbReference type="InParanoid" id="P0CF07"/>
<dbReference type="OMA" id="HCKSEDL"/>
<dbReference type="PhylomeDB" id="P0CF07"/>
<dbReference type="BioCyc" id="EcoCyc:G6086-MONOMER"/>
<dbReference type="PRO" id="PR:P0CF07"/>
<dbReference type="Proteomes" id="UP000000625">
    <property type="component" value="Chromosome"/>
</dbReference>
<dbReference type="GO" id="GO:0006313">
    <property type="term" value="P:DNA transposition"/>
    <property type="evidence" value="ECO:0000315"/>
    <property type="project" value="EcoCyc"/>
</dbReference>
<dbReference type="InterPro" id="IPR024431">
    <property type="entry name" value="InsA_HTH_dom"/>
</dbReference>
<dbReference type="InterPro" id="IPR003220">
    <property type="entry name" value="InsA_N_dom_Znf"/>
</dbReference>
<dbReference type="InterPro" id="IPR051252">
    <property type="entry name" value="IS1_transposase_InsA"/>
</dbReference>
<dbReference type="PANTHER" id="PTHR47923">
    <property type="entry name" value="INSERTION ELEMENT IS1 1 PROTEIN INSA-RELATED"/>
    <property type="match status" value="1"/>
</dbReference>
<dbReference type="PANTHER" id="PTHR47923:SF1">
    <property type="entry name" value="INSERTION ELEMENT IS1 1 PROTEIN INSA-RELATED"/>
    <property type="match status" value="1"/>
</dbReference>
<dbReference type="Pfam" id="PF12759">
    <property type="entry name" value="HTH_Tnp_IS1"/>
    <property type="match status" value="1"/>
</dbReference>
<dbReference type="Pfam" id="PF03811">
    <property type="entry name" value="Zn_ribbon_InsA"/>
    <property type="match status" value="1"/>
</dbReference>
<reference key="1">
    <citation type="journal article" date="1979" name="Mol. Gen. Genet.">
        <title>DNA sequence of the transposable element IS1.</title>
        <authorList>
            <person name="Johnsrud L."/>
        </authorList>
    </citation>
    <scope>NUCLEOTIDE SEQUENCE [GENOMIC DNA]</scope>
</reference>
<reference key="2">
    <citation type="journal article" date="1991" name="Gene">
        <title>Four types of IS1 with differences in nucleotide sequence reside in the Escherichia coli K-12 chromosome.</title>
        <authorList>
            <person name="Umeda M."/>
            <person name="Ohtsubo E."/>
        </authorList>
    </citation>
    <scope>NUCLEOTIDE SEQUENCE [GENOMIC DNA]</scope>
    <source>
        <strain>K12 / W3110 / ATCC 27325 / DSM 5911</strain>
    </source>
</reference>
<reference key="3">
    <citation type="journal article" date="1992" name="Nucleic Acids Res.">
        <title>Systematic sequencing of the Escherichia coli genome: analysis of the 0-2.4 min region.</title>
        <authorList>
            <person name="Yura T."/>
            <person name="Mori H."/>
            <person name="Nagai H."/>
            <person name="Nagata T."/>
            <person name="Ishihama A."/>
            <person name="Fujita N."/>
            <person name="Isono K."/>
            <person name="Mizobuchi K."/>
            <person name="Nakata A."/>
        </authorList>
    </citation>
    <scope>NUCLEOTIDE SEQUENCE [LARGE SCALE GENOMIC DNA]</scope>
    <source>
        <strain>K12</strain>
    </source>
</reference>
<reference key="4">
    <citation type="journal article" date="1997" name="Science">
        <title>The complete genome sequence of Escherichia coli K-12.</title>
        <authorList>
            <person name="Blattner F.R."/>
            <person name="Plunkett G. III"/>
            <person name="Bloch C.A."/>
            <person name="Perna N.T."/>
            <person name="Burland V."/>
            <person name="Riley M."/>
            <person name="Collado-Vides J."/>
            <person name="Glasner J.D."/>
            <person name="Rode C.K."/>
            <person name="Mayhew G.F."/>
            <person name="Gregor J."/>
            <person name="Davis N.W."/>
            <person name="Kirkpatrick H.A."/>
            <person name="Goeden M.A."/>
            <person name="Rose D.J."/>
            <person name="Mau B."/>
            <person name="Shao Y."/>
        </authorList>
    </citation>
    <scope>NUCLEOTIDE SEQUENCE [LARGE SCALE GENOMIC DNA]</scope>
    <source>
        <strain>K12 / MG1655 / ATCC 47076</strain>
    </source>
</reference>
<reference key="5">
    <citation type="journal article" date="2006" name="Mol. Syst. Biol.">
        <title>Highly accurate genome sequences of Escherichia coli K-12 strains MG1655 and W3110.</title>
        <authorList>
            <person name="Hayashi K."/>
            <person name="Morooka N."/>
            <person name="Yamamoto Y."/>
            <person name="Fujita K."/>
            <person name="Isono K."/>
            <person name="Choi S."/>
            <person name="Ohtsubo E."/>
            <person name="Baba T."/>
            <person name="Wanner B.L."/>
            <person name="Mori H."/>
            <person name="Horiuchi T."/>
        </authorList>
    </citation>
    <scope>NUCLEOTIDE SEQUENCE [LARGE SCALE GENOMIC DNA]</scope>
    <source>
        <strain>K12 / W3110 / ATCC 27325 / DSM 5911</strain>
    </source>
</reference>
<name>INSA1_ECOLI</name>
<comment type="function">
    <text>Absolutely required for transposition of IS1.</text>
</comment>
<comment type="similarity">
    <text evidence="1">Belongs to the IS1 elements InsA family.</text>
</comment>
<gene>
    <name type="primary">insA1</name>
    <name type="ordered locus">b0022</name>
    <name type="ordered locus">JW0021</name>
</gene>
<accession>P0CF07</accession>
<accession>P03827</accession>
<accession>P0ADH0</accession>
<accession>P0C650</accession>
<accession>Q2EER2</accession>
<accession>Q2MCF5</accession>
<accession>Q2MCH2</accession>
<accession>Q933I5</accession>
<keyword id="KW-0233">DNA recombination</keyword>
<keyword id="KW-1185">Reference proteome</keyword>
<keyword id="KW-0814">Transposable element</keyword>
<keyword id="KW-0815">Transposition</keyword>
<organism>
    <name type="scientific">Escherichia coli (strain K12)</name>
    <dbReference type="NCBI Taxonomy" id="83333"/>
    <lineage>
        <taxon>Bacteria</taxon>
        <taxon>Pseudomonadati</taxon>
        <taxon>Pseudomonadota</taxon>
        <taxon>Gammaproteobacteria</taxon>
        <taxon>Enterobacterales</taxon>
        <taxon>Enterobacteriaceae</taxon>
        <taxon>Escherichia</taxon>
    </lineage>
</organism>
<feature type="chain" id="PRO_0000075393" description="Insertion element IS1 1 protein InsA">
    <location>
        <begin position="1"/>
        <end position="91"/>
    </location>
</feature>
<evidence type="ECO:0000305" key="1"/>